<keyword id="KW-0058">Aromatic hydrocarbons catabolism</keyword>
<keyword id="KW-0456">Lyase</keyword>
<keyword id="KW-0479">Metal-binding</keyword>
<keyword id="KW-1185">Reference proteome</keyword>
<comment type="function">
    <text evidence="1">Catalyzes the reversible retro-aldol cleavage of 4-hydroxy-2-ketoheptane-1,7-dioate (HKHD) to pyruvate and succinic semialdehyde.</text>
</comment>
<comment type="catalytic activity">
    <reaction evidence="1">
        <text>4-hydroxy-2-oxoheptanedioate = succinate semialdehyde + pyruvate</text>
        <dbReference type="Rhea" id="RHEA:25788"/>
        <dbReference type="ChEBI" id="CHEBI:15361"/>
        <dbReference type="ChEBI" id="CHEBI:57706"/>
        <dbReference type="ChEBI" id="CHEBI:73036"/>
        <dbReference type="EC" id="4.1.2.52"/>
    </reaction>
</comment>
<comment type="cofactor">
    <cofactor evidence="1">
        <name>a divalent metal cation</name>
        <dbReference type="ChEBI" id="CHEBI:60240"/>
    </cofactor>
    <text evidence="1">Binds 1 divalent metal cation per subunit.</text>
</comment>
<comment type="pathway">
    <text evidence="1">Aromatic compound metabolism; 4-hydroxyphenylacetate degradation; pyruvate and succinate semialdehyde from 4-hydroxyphenylacetate: step 7/7.</text>
</comment>
<comment type="subunit">
    <text evidence="1">Homohexamer; trimer of dimers.</text>
</comment>
<comment type="similarity">
    <text evidence="1">Belongs to the HpcH/HpaI aldolase family.</text>
</comment>
<proteinExistence type="inferred from homology"/>
<reference key="1">
    <citation type="submission" date="2008-05" db="EMBL/GenBank/DDBJ databases">
        <title>Complete sequence of Shigella boydii serotype 18 strain BS512.</title>
        <authorList>
            <person name="Rasko D.A."/>
            <person name="Rosovitz M."/>
            <person name="Maurelli A.T."/>
            <person name="Myers G."/>
            <person name="Seshadri R."/>
            <person name="Cer R."/>
            <person name="Jiang L."/>
            <person name="Ravel J."/>
            <person name="Sebastian Y."/>
        </authorList>
    </citation>
    <scope>NUCLEOTIDE SEQUENCE [LARGE SCALE GENOMIC DNA]</scope>
    <source>
        <strain>CDC 3083-94 / BS512</strain>
    </source>
</reference>
<dbReference type="EC" id="4.1.2.52" evidence="1"/>
<dbReference type="EMBL" id="CP001063">
    <property type="protein sequence ID" value="ACD09646.1"/>
    <property type="molecule type" value="Genomic_DNA"/>
</dbReference>
<dbReference type="RefSeq" id="WP_000431691.1">
    <property type="nucleotide sequence ID" value="NC_010658.1"/>
</dbReference>
<dbReference type="SMR" id="B2TZN1"/>
<dbReference type="STRING" id="344609.SbBS512_E4885"/>
<dbReference type="KEGG" id="sbc:SbBS512_E4885"/>
<dbReference type="HOGENOM" id="CLU_059964_1_0_6"/>
<dbReference type="UniPathway" id="UPA00208">
    <property type="reaction ID" value="UER00422"/>
</dbReference>
<dbReference type="Proteomes" id="UP000001030">
    <property type="component" value="Chromosome"/>
</dbReference>
<dbReference type="GO" id="GO:0005737">
    <property type="term" value="C:cytoplasm"/>
    <property type="evidence" value="ECO:0007669"/>
    <property type="project" value="TreeGrafter"/>
</dbReference>
<dbReference type="GO" id="GO:0043863">
    <property type="term" value="F:4-hydroxy-2-ketopimelate aldolase activity"/>
    <property type="evidence" value="ECO:0007669"/>
    <property type="project" value="RHEA"/>
</dbReference>
<dbReference type="GO" id="GO:0046872">
    <property type="term" value="F:metal ion binding"/>
    <property type="evidence" value="ECO:0007669"/>
    <property type="project" value="UniProtKB-UniRule"/>
</dbReference>
<dbReference type="GO" id="GO:1901023">
    <property type="term" value="P:4-hydroxyphenylacetate catabolic process"/>
    <property type="evidence" value="ECO:0007669"/>
    <property type="project" value="UniProtKB-UniRule"/>
</dbReference>
<dbReference type="GO" id="GO:0010124">
    <property type="term" value="P:phenylacetate catabolic process"/>
    <property type="evidence" value="ECO:0007669"/>
    <property type="project" value="InterPro"/>
</dbReference>
<dbReference type="FunFam" id="3.20.20.60:FF:000004">
    <property type="entry name" value="5-keto-4-deoxy-D-glucarate aldolase"/>
    <property type="match status" value="1"/>
</dbReference>
<dbReference type="Gene3D" id="3.20.20.60">
    <property type="entry name" value="Phosphoenolpyruvate-binding domains"/>
    <property type="match status" value="1"/>
</dbReference>
<dbReference type="HAMAP" id="MF_01292">
    <property type="entry name" value="HKHD_aldolase"/>
    <property type="match status" value="1"/>
</dbReference>
<dbReference type="InterPro" id="IPR005000">
    <property type="entry name" value="Aldolase/citrate-lyase_domain"/>
</dbReference>
<dbReference type="InterPro" id="IPR023701">
    <property type="entry name" value="HKHD_aldolase_ent"/>
</dbReference>
<dbReference type="InterPro" id="IPR012689">
    <property type="entry name" value="HpaI"/>
</dbReference>
<dbReference type="InterPro" id="IPR050251">
    <property type="entry name" value="HpcH-HpaI_aldolase"/>
</dbReference>
<dbReference type="InterPro" id="IPR015813">
    <property type="entry name" value="Pyrv/PenolPyrv_kinase-like_dom"/>
</dbReference>
<dbReference type="InterPro" id="IPR040442">
    <property type="entry name" value="Pyrv_kinase-like_dom_sf"/>
</dbReference>
<dbReference type="NCBIfam" id="TIGR02311">
    <property type="entry name" value="HpaI"/>
    <property type="match status" value="1"/>
</dbReference>
<dbReference type="PANTHER" id="PTHR30502">
    <property type="entry name" value="2-KETO-3-DEOXY-L-RHAMNONATE ALDOLASE"/>
    <property type="match status" value="1"/>
</dbReference>
<dbReference type="PANTHER" id="PTHR30502:SF0">
    <property type="entry name" value="PHOSPHOENOLPYRUVATE CARBOXYLASE FAMILY PROTEIN"/>
    <property type="match status" value="1"/>
</dbReference>
<dbReference type="Pfam" id="PF03328">
    <property type="entry name" value="HpcH_HpaI"/>
    <property type="match status" value="1"/>
</dbReference>
<dbReference type="SUPFAM" id="SSF51621">
    <property type="entry name" value="Phosphoenolpyruvate/pyruvate domain"/>
    <property type="match status" value="1"/>
</dbReference>
<organism>
    <name type="scientific">Shigella boydii serotype 18 (strain CDC 3083-94 / BS512)</name>
    <dbReference type="NCBI Taxonomy" id="344609"/>
    <lineage>
        <taxon>Bacteria</taxon>
        <taxon>Pseudomonadati</taxon>
        <taxon>Pseudomonadota</taxon>
        <taxon>Gammaproteobacteria</taxon>
        <taxon>Enterobacterales</taxon>
        <taxon>Enterobacteriaceae</taxon>
        <taxon>Shigella</taxon>
    </lineage>
</organism>
<feature type="chain" id="PRO_0000355112" description="4-hydroxy-2-oxo-heptane-1,7-dioate aldolase">
    <location>
        <begin position="1"/>
        <end position="262"/>
    </location>
</feature>
<feature type="active site" description="Proton acceptor" evidence="1">
    <location>
        <position position="45"/>
    </location>
</feature>
<feature type="binding site" evidence="1">
    <location>
        <position position="147"/>
    </location>
    <ligand>
        <name>substrate</name>
    </ligand>
</feature>
<feature type="binding site" evidence="1">
    <location>
        <position position="149"/>
    </location>
    <ligand>
        <name>a divalent metal cation</name>
        <dbReference type="ChEBI" id="CHEBI:60240"/>
    </ligand>
</feature>
<feature type="binding site" evidence="1">
    <location>
        <position position="174"/>
    </location>
    <ligand>
        <name>substrate</name>
    </ligand>
</feature>
<feature type="binding site" evidence="1">
    <location>
        <position position="175"/>
    </location>
    <ligand>
        <name>a divalent metal cation</name>
        <dbReference type="ChEBI" id="CHEBI:60240"/>
    </ligand>
</feature>
<feature type="binding site" evidence="1">
    <location>
        <position position="175"/>
    </location>
    <ligand>
        <name>substrate</name>
    </ligand>
</feature>
<feature type="site" description="Transition state stabilizer" evidence="1">
    <location>
        <position position="70"/>
    </location>
</feature>
<feature type="site" description="Increases basicity of active site His" evidence="1">
    <location>
        <position position="84"/>
    </location>
</feature>
<evidence type="ECO:0000255" key="1">
    <source>
        <dbReference type="HAMAP-Rule" id="MF_01292"/>
    </source>
</evidence>
<sequence length="262" mass="28100">MENSFKAALKAGRPQIGLWLGLSSSYSAELLAGAGFDWLLIDGEHAPNNVQTVLTQLQAIAPYPNQPVVRPSWNDPVQIKQLLDVGTQTLLVPMVQNADEAREAVRATRYPPAGIRGVGSALARASRWNRIPDYLQKANDQMCVLVQIETREAMKNLPQILDVEGVDGVFIGPADLSADMGYAGNPQHPEVQAAIEQAIVQIRESGKAPGILIANEQLAKRYLELGALFVAVGVDTTLLARAAEALAARFGAQATAVKPGVY</sequence>
<protein>
    <recommendedName>
        <fullName evidence="1">4-hydroxy-2-oxo-heptane-1,7-dioate aldolase</fullName>
        <ecNumber evidence="1">4.1.2.52</ecNumber>
    </recommendedName>
    <alternativeName>
        <fullName evidence="1">2,4-dihydroxyhept-2-ene-1,7-dioic acid aldolase</fullName>
        <shortName evidence="1">HHED aldolase</shortName>
    </alternativeName>
    <alternativeName>
        <fullName evidence="1">4-hydroxy-2-ketoheptane-1,7-dioate aldolase</fullName>
        <shortName evidence="1">HKHD aldolase</shortName>
    </alternativeName>
</protein>
<name>HPCH_SHIB3</name>
<gene>
    <name evidence="1" type="primary">hpcH</name>
    <name evidence="1" type="synonym">hpaI</name>
    <name type="ordered locus">SbBS512_E4885</name>
</gene>
<accession>B2TZN1</accession>